<proteinExistence type="inferred from homology"/>
<gene>
    <name type="primary">rpl14</name>
</gene>
<geneLocation type="non-photosynthetic plastid"/>
<name>RK14_HELSJ</name>
<organism>
    <name type="scientific">Helicosporidium sp. subsp. Simulium jonesii</name>
    <name type="common">Green alga</name>
    <dbReference type="NCBI Taxonomy" id="145475"/>
    <lineage>
        <taxon>Eukaryota</taxon>
        <taxon>Viridiplantae</taxon>
        <taxon>Chlorophyta</taxon>
        <taxon>core chlorophytes</taxon>
        <taxon>Trebouxiophyceae</taxon>
        <taxon>Chlorellales</taxon>
        <taxon>Chlorellaceae</taxon>
        <taxon>Helicosporidium</taxon>
    </lineage>
</organism>
<dbReference type="EMBL" id="DQ398104">
    <property type="protein sequence ID" value="ABD33980.1"/>
    <property type="molecule type" value="Genomic_DNA"/>
</dbReference>
<dbReference type="RefSeq" id="YP_635932.1">
    <property type="nucleotide sequence ID" value="NC_008100.1"/>
</dbReference>
<dbReference type="SMR" id="Q2EEW2"/>
<dbReference type="GeneID" id="4100426"/>
<dbReference type="GO" id="GO:0022625">
    <property type="term" value="C:cytosolic large ribosomal subunit"/>
    <property type="evidence" value="ECO:0007669"/>
    <property type="project" value="TreeGrafter"/>
</dbReference>
<dbReference type="GO" id="GO:0009536">
    <property type="term" value="C:plastid"/>
    <property type="evidence" value="ECO:0007669"/>
    <property type="project" value="UniProtKB-SubCell"/>
</dbReference>
<dbReference type="GO" id="GO:0070180">
    <property type="term" value="F:large ribosomal subunit rRNA binding"/>
    <property type="evidence" value="ECO:0007669"/>
    <property type="project" value="TreeGrafter"/>
</dbReference>
<dbReference type="GO" id="GO:0003735">
    <property type="term" value="F:structural constituent of ribosome"/>
    <property type="evidence" value="ECO:0007669"/>
    <property type="project" value="InterPro"/>
</dbReference>
<dbReference type="GO" id="GO:0006412">
    <property type="term" value="P:translation"/>
    <property type="evidence" value="ECO:0007669"/>
    <property type="project" value="InterPro"/>
</dbReference>
<dbReference type="CDD" id="cd00337">
    <property type="entry name" value="Ribosomal_uL14"/>
    <property type="match status" value="1"/>
</dbReference>
<dbReference type="Gene3D" id="2.40.150.20">
    <property type="entry name" value="Ribosomal protein L14"/>
    <property type="match status" value="1"/>
</dbReference>
<dbReference type="HAMAP" id="MF_01367">
    <property type="entry name" value="Ribosomal_uL14"/>
    <property type="match status" value="1"/>
</dbReference>
<dbReference type="InterPro" id="IPR000218">
    <property type="entry name" value="Ribosomal_uL14"/>
</dbReference>
<dbReference type="InterPro" id="IPR005745">
    <property type="entry name" value="Ribosomal_uL14_bac-type"/>
</dbReference>
<dbReference type="InterPro" id="IPR019972">
    <property type="entry name" value="Ribosomal_uL14_CS"/>
</dbReference>
<dbReference type="InterPro" id="IPR036853">
    <property type="entry name" value="Ribosomal_uL14_sf"/>
</dbReference>
<dbReference type="NCBIfam" id="TIGR01067">
    <property type="entry name" value="rplN_bact"/>
    <property type="match status" value="1"/>
</dbReference>
<dbReference type="PANTHER" id="PTHR11761">
    <property type="entry name" value="50S/60S RIBOSOMAL PROTEIN L14/L23"/>
    <property type="match status" value="1"/>
</dbReference>
<dbReference type="PANTHER" id="PTHR11761:SF3">
    <property type="entry name" value="LARGE RIBOSOMAL SUBUNIT PROTEIN UL14M"/>
    <property type="match status" value="1"/>
</dbReference>
<dbReference type="Pfam" id="PF00238">
    <property type="entry name" value="Ribosomal_L14"/>
    <property type="match status" value="1"/>
</dbReference>
<dbReference type="SMART" id="SM01374">
    <property type="entry name" value="Ribosomal_L14"/>
    <property type="match status" value="1"/>
</dbReference>
<dbReference type="SUPFAM" id="SSF50193">
    <property type="entry name" value="Ribosomal protein L14"/>
    <property type="match status" value="1"/>
</dbReference>
<dbReference type="PROSITE" id="PS00049">
    <property type="entry name" value="RIBOSOMAL_L14"/>
    <property type="match status" value="1"/>
</dbReference>
<keyword id="KW-0934">Plastid</keyword>
<keyword id="KW-0687">Ribonucleoprotein</keyword>
<keyword id="KW-0689">Ribosomal protein</keyword>
<keyword id="KW-0694">RNA-binding</keyword>
<keyword id="KW-0699">rRNA-binding</keyword>
<evidence type="ECO:0000250" key="1"/>
<evidence type="ECO:0000305" key="2"/>
<sequence length="122" mass="13351">MIQAQTILQVADNTGAKEIMCIRVLRGSSKKGARVGDIIVAVVKKTKKQTSVKKSEIVRAVIVRTRTTIHRANGMHLKFNENAAVLVTKELHPKGTRLFGPIPYECSEAGLNSIISLAPYII</sequence>
<accession>Q2EEW2</accession>
<feature type="chain" id="PRO_0000308999" description="Large ribosomal subunit protein uL14c">
    <location>
        <begin position="1"/>
        <end position="122"/>
    </location>
</feature>
<protein>
    <recommendedName>
        <fullName evidence="2">Large ribosomal subunit protein uL14c</fullName>
    </recommendedName>
    <alternativeName>
        <fullName>50S ribosomal protein L14, plastid</fullName>
    </alternativeName>
</protein>
<reference key="1">
    <citation type="journal article" date="2006" name="BMC Biol.">
        <title>The complete plastid genome sequence of the parasitic green alga, Helicosporidium sp. is highly reduced and structured.</title>
        <authorList>
            <person name="de Koning A.P."/>
            <person name="Keeling P.J."/>
        </authorList>
    </citation>
    <scope>NUCLEOTIDE SEQUENCE [LARGE SCALE GENOMIC DNA]</scope>
</reference>
<comment type="function">
    <text evidence="1">Binds to 23S rRNA.</text>
</comment>
<comment type="subunit">
    <text evidence="1">Part of the 50S ribosomal subunit.</text>
</comment>
<comment type="subcellular location">
    <subcellularLocation>
        <location>Plastid</location>
    </subcellularLocation>
</comment>
<comment type="similarity">
    <text evidence="2">Belongs to the universal ribosomal protein uL14 family.</text>
</comment>